<proteinExistence type="inferred from homology"/>
<reference key="1">
    <citation type="journal article" date="2008" name="Genomics">
        <title>Evolution in the laboratory: the genome of Halobacterium salinarum strain R1 compared to that of strain NRC-1.</title>
        <authorList>
            <person name="Pfeiffer F."/>
            <person name="Schuster S.C."/>
            <person name="Broicher A."/>
            <person name="Falb M."/>
            <person name="Palm P."/>
            <person name="Rodewald K."/>
            <person name="Ruepp A."/>
            <person name="Soppa J."/>
            <person name="Tittor J."/>
            <person name="Oesterhelt D."/>
        </authorList>
    </citation>
    <scope>NUCLEOTIDE SEQUENCE [LARGE SCALE GENOMIC DNA]</scope>
    <source>
        <strain>ATCC 29341 / DSM 671 / R1</strain>
    </source>
</reference>
<keyword id="KW-0143">Chaperone</keyword>
<keyword id="KW-0963">Cytoplasm</keyword>
<keyword id="KW-0346">Stress response</keyword>
<protein>
    <recommendedName>
        <fullName evidence="1">Protein GrpE</fullName>
    </recommendedName>
    <alternativeName>
        <fullName evidence="1">HSP-70 cofactor</fullName>
    </alternativeName>
</protein>
<organism>
    <name type="scientific">Halobacterium salinarum (strain ATCC 29341 / DSM 671 / R1)</name>
    <dbReference type="NCBI Taxonomy" id="478009"/>
    <lineage>
        <taxon>Archaea</taxon>
        <taxon>Methanobacteriati</taxon>
        <taxon>Methanobacteriota</taxon>
        <taxon>Stenosarchaea group</taxon>
        <taxon>Halobacteria</taxon>
        <taxon>Halobacteriales</taxon>
        <taxon>Halobacteriaceae</taxon>
        <taxon>Halobacterium</taxon>
        <taxon>Halobacterium salinarum NRC-34001</taxon>
    </lineage>
</organism>
<evidence type="ECO:0000255" key="1">
    <source>
        <dbReference type="HAMAP-Rule" id="MF_01151"/>
    </source>
</evidence>
<evidence type="ECO:0000256" key="2">
    <source>
        <dbReference type="SAM" id="MobiDB-lite"/>
    </source>
</evidence>
<accession>B0R3H6</accession>
<sequence>MSDHAEHAADAADTDAPEGDDAGGDDGEQAGDDGTSALSERVRALDADNADALADDVAALEARVETLTDELADAEDEVADLTERVQTKQADFKNYKERAKRKQEEIRERATEDLVERLLDVRDNLDRALDQEESESDEDGIREGVELTRDEFDRVLETEGVTEIRPEPGDSVDAARHEVMMRVDSDQPAGTIVDVYRPGYEMSGRVVRAAQVTVSEE</sequence>
<comment type="function">
    <text evidence="1">Participates actively in the response to hyperosmotic and heat shock by preventing the aggregation of stress-denatured proteins, in association with DnaK and GrpE. It is the nucleotide exchange factor for DnaK and may function as a thermosensor. Unfolded proteins bind initially to DnaJ; upon interaction with the DnaJ-bound protein, DnaK hydrolyzes its bound ATP, resulting in the formation of a stable complex. GrpE releases ADP from DnaK; ATP binding to DnaK triggers the release of the substrate protein, thus completing the reaction cycle. Several rounds of ATP-dependent interactions between DnaJ, DnaK and GrpE are required for fully efficient folding.</text>
</comment>
<comment type="subunit">
    <text evidence="1">Homodimer.</text>
</comment>
<comment type="subcellular location">
    <subcellularLocation>
        <location evidence="1">Cytoplasm</location>
    </subcellularLocation>
</comment>
<comment type="similarity">
    <text evidence="1">Belongs to the GrpE family.</text>
</comment>
<name>GRPE_HALS3</name>
<gene>
    <name evidence="1" type="primary">grpE</name>
    <name type="ordered locus">OE_1742R</name>
</gene>
<feature type="chain" id="PRO_1000137574" description="Protein GrpE">
    <location>
        <begin position="1"/>
        <end position="217"/>
    </location>
</feature>
<feature type="region of interest" description="Disordered" evidence="2">
    <location>
        <begin position="1"/>
        <end position="39"/>
    </location>
</feature>
<feature type="compositionally biased region" description="Basic and acidic residues" evidence="2">
    <location>
        <begin position="1"/>
        <end position="10"/>
    </location>
</feature>
<feature type="compositionally biased region" description="Acidic residues" evidence="2">
    <location>
        <begin position="12"/>
        <end position="31"/>
    </location>
</feature>
<dbReference type="EMBL" id="AM774415">
    <property type="protein sequence ID" value="CAP13290.1"/>
    <property type="molecule type" value="Genomic_DNA"/>
</dbReference>
<dbReference type="RefSeq" id="WP_010902324.1">
    <property type="nucleotide sequence ID" value="NC_010364.1"/>
</dbReference>
<dbReference type="SMR" id="B0R3H6"/>
<dbReference type="EnsemblBacteria" id="CAP13290">
    <property type="protein sequence ID" value="CAP13290"/>
    <property type="gene ID" value="OE_1742R"/>
</dbReference>
<dbReference type="KEGG" id="hsl:OE_1742R"/>
<dbReference type="HOGENOM" id="CLU_057217_3_0_2"/>
<dbReference type="PhylomeDB" id="B0R3H6"/>
<dbReference type="Proteomes" id="UP000001321">
    <property type="component" value="Chromosome"/>
</dbReference>
<dbReference type="GO" id="GO:0005737">
    <property type="term" value="C:cytoplasm"/>
    <property type="evidence" value="ECO:0007669"/>
    <property type="project" value="UniProtKB-SubCell"/>
</dbReference>
<dbReference type="GO" id="GO:0000774">
    <property type="term" value="F:adenyl-nucleotide exchange factor activity"/>
    <property type="evidence" value="ECO:0007669"/>
    <property type="project" value="InterPro"/>
</dbReference>
<dbReference type="GO" id="GO:0042803">
    <property type="term" value="F:protein homodimerization activity"/>
    <property type="evidence" value="ECO:0007669"/>
    <property type="project" value="InterPro"/>
</dbReference>
<dbReference type="GO" id="GO:0051087">
    <property type="term" value="F:protein-folding chaperone binding"/>
    <property type="evidence" value="ECO:0007669"/>
    <property type="project" value="InterPro"/>
</dbReference>
<dbReference type="GO" id="GO:0051082">
    <property type="term" value="F:unfolded protein binding"/>
    <property type="evidence" value="ECO:0007669"/>
    <property type="project" value="TreeGrafter"/>
</dbReference>
<dbReference type="GO" id="GO:0006457">
    <property type="term" value="P:protein folding"/>
    <property type="evidence" value="ECO:0007669"/>
    <property type="project" value="InterPro"/>
</dbReference>
<dbReference type="CDD" id="cd00446">
    <property type="entry name" value="GrpE"/>
    <property type="match status" value="1"/>
</dbReference>
<dbReference type="Gene3D" id="3.90.20.20">
    <property type="match status" value="1"/>
</dbReference>
<dbReference type="Gene3D" id="2.30.22.10">
    <property type="entry name" value="Head domain of nucleotide exchange factor GrpE"/>
    <property type="match status" value="1"/>
</dbReference>
<dbReference type="HAMAP" id="MF_01151">
    <property type="entry name" value="GrpE"/>
    <property type="match status" value="1"/>
</dbReference>
<dbReference type="InterPro" id="IPR000740">
    <property type="entry name" value="GrpE"/>
</dbReference>
<dbReference type="InterPro" id="IPR013805">
    <property type="entry name" value="GrpE_coiled_coil"/>
</dbReference>
<dbReference type="InterPro" id="IPR009012">
    <property type="entry name" value="GrpE_head"/>
</dbReference>
<dbReference type="PANTHER" id="PTHR21237">
    <property type="entry name" value="GRPE PROTEIN"/>
    <property type="match status" value="1"/>
</dbReference>
<dbReference type="PANTHER" id="PTHR21237:SF23">
    <property type="entry name" value="GRPE PROTEIN HOMOLOG, MITOCHONDRIAL"/>
    <property type="match status" value="1"/>
</dbReference>
<dbReference type="Pfam" id="PF01025">
    <property type="entry name" value="GrpE"/>
    <property type="match status" value="1"/>
</dbReference>
<dbReference type="PRINTS" id="PR00773">
    <property type="entry name" value="GRPEPROTEIN"/>
</dbReference>
<dbReference type="SUPFAM" id="SSF58014">
    <property type="entry name" value="Coiled-coil domain of nucleotide exchange factor GrpE"/>
    <property type="match status" value="1"/>
</dbReference>
<dbReference type="SUPFAM" id="SSF51064">
    <property type="entry name" value="Head domain of nucleotide exchange factor GrpE"/>
    <property type="match status" value="1"/>
</dbReference>
<dbReference type="PROSITE" id="PS01071">
    <property type="entry name" value="GRPE"/>
    <property type="match status" value="1"/>
</dbReference>